<feature type="chain" id="PRO_0000121995" description="Serine--tRNA ligase">
    <location>
        <begin position="1"/>
        <end position="425"/>
    </location>
</feature>
<feature type="binding site" evidence="1">
    <location>
        <begin position="231"/>
        <end position="233"/>
    </location>
    <ligand>
        <name>L-serine</name>
        <dbReference type="ChEBI" id="CHEBI:33384"/>
    </ligand>
</feature>
<feature type="binding site" evidence="1">
    <location>
        <begin position="262"/>
        <end position="264"/>
    </location>
    <ligand>
        <name>ATP</name>
        <dbReference type="ChEBI" id="CHEBI:30616"/>
    </ligand>
</feature>
<feature type="binding site" evidence="1">
    <location>
        <position position="285"/>
    </location>
    <ligand>
        <name>L-serine</name>
        <dbReference type="ChEBI" id="CHEBI:33384"/>
    </ligand>
</feature>
<feature type="binding site" evidence="1">
    <location>
        <begin position="349"/>
        <end position="352"/>
    </location>
    <ligand>
        <name>ATP</name>
        <dbReference type="ChEBI" id="CHEBI:30616"/>
    </ligand>
</feature>
<feature type="binding site" evidence="1">
    <location>
        <position position="385"/>
    </location>
    <ligand>
        <name>L-serine</name>
        <dbReference type="ChEBI" id="CHEBI:33384"/>
    </ligand>
</feature>
<feature type="helix" evidence="2">
    <location>
        <begin position="4"/>
        <end position="9"/>
    </location>
</feature>
<feature type="helix" evidence="2">
    <location>
        <begin position="11"/>
        <end position="18"/>
    </location>
</feature>
<feature type="turn" evidence="2">
    <location>
        <begin position="19"/>
        <end position="21"/>
    </location>
</feature>
<feature type="helix" evidence="2">
    <location>
        <begin position="23"/>
        <end position="25"/>
    </location>
</feature>
<feature type="helix" evidence="2">
    <location>
        <begin position="26"/>
        <end position="59"/>
    </location>
</feature>
<feature type="helix" evidence="2">
    <location>
        <begin position="62"/>
        <end position="64"/>
    </location>
</feature>
<feature type="turn" evidence="2">
    <location>
        <begin position="70"/>
        <end position="72"/>
    </location>
</feature>
<feature type="helix" evidence="2">
    <location>
        <begin position="76"/>
        <end position="103"/>
    </location>
</feature>
<feature type="helix" evidence="2">
    <location>
        <begin position="119"/>
        <end position="121"/>
    </location>
</feature>
<feature type="strand" evidence="2">
    <location>
        <begin position="123"/>
        <end position="129"/>
    </location>
</feature>
<feature type="helix" evidence="2">
    <location>
        <begin position="141"/>
        <end position="147"/>
    </location>
</feature>
<feature type="helix" evidence="2">
    <location>
        <begin position="153"/>
        <end position="160"/>
    </location>
</feature>
<feature type="strand" evidence="2">
    <location>
        <begin position="166"/>
        <end position="168"/>
    </location>
</feature>
<feature type="helix" evidence="2">
    <location>
        <begin position="170"/>
        <end position="188"/>
    </location>
</feature>
<feature type="strand" evidence="2">
    <location>
        <begin position="192"/>
        <end position="195"/>
    </location>
</feature>
<feature type="strand" evidence="2">
    <location>
        <begin position="198"/>
        <end position="200"/>
    </location>
</feature>
<feature type="helix" evidence="2">
    <location>
        <begin position="202"/>
        <end position="208"/>
    </location>
</feature>
<feature type="turn" evidence="2">
    <location>
        <begin position="211"/>
        <end position="214"/>
    </location>
</feature>
<feature type="helix" evidence="2">
    <location>
        <begin position="215"/>
        <end position="217"/>
    </location>
</feature>
<feature type="turn" evidence="2">
    <location>
        <begin position="222"/>
        <end position="224"/>
    </location>
</feature>
<feature type="helix" evidence="2">
    <location>
        <begin position="233"/>
        <end position="237"/>
    </location>
</feature>
<feature type="helix" evidence="2">
    <location>
        <begin position="238"/>
        <end position="240"/>
    </location>
</feature>
<feature type="strand" evidence="2">
    <location>
        <begin position="243"/>
        <end position="246"/>
    </location>
</feature>
<feature type="turn" evidence="2">
    <location>
        <begin position="247"/>
        <end position="249"/>
    </location>
</feature>
<feature type="strand" evidence="2">
    <location>
        <begin position="252"/>
        <end position="261"/>
    </location>
</feature>
<feature type="strand" evidence="2">
    <location>
        <begin position="269"/>
        <end position="271"/>
    </location>
</feature>
<feature type="strand" evidence="2">
    <location>
        <begin position="273"/>
        <end position="277"/>
    </location>
</feature>
<feature type="strand" evidence="2">
    <location>
        <begin position="279"/>
        <end position="290"/>
    </location>
</feature>
<feature type="helix" evidence="2">
    <location>
        <begin position="292"/>
        <end position="294"/>
    </location>
</feature>
<feature type="helix" evidence="2">
    <location>
        <begin position="295"/>
        <end position="313"/>
    </location>
</feature>
<feature type="strand" evidence="2">
    <location>
        <begin position="317"/>
        <end position="321"/>
    </location>
</feature>
<feature type="turn" evidence="2">
    <location>
        <begin position="324"/>
        <end position="326"/>
    </location>
</feature>
<feature type="strand" evidence="2">
    <location>
        <begin position="332"/>
        <end position="341"/>
    </location>
</feature>
<feature type="helix" evidence="2">
    <location>
        <begin position="342"/>
        <end position="344"/>
    </location>
</feature>
<feature type="strand" evidence="2">
    <location>
        <begin position="346"/>
        <end position="355"/>
    </location>
</feature>
<feature type="helix" evidence="2">
    <location>
        <begin position="359"/>
        <end position="364"/>
    </location>
</feature>
<feature type="strand" evidence="2">
    <location>
        <begin position="366"/>
        <end position="369"/>
    </location>
</feature>
<feature type="turn" evidence="2">
    <location>
        <begin position="371"/>
        <end position="373"/>
    </location>
</feature>
<feature type="strand" evidence="2">
    <location>
        <begin position="375"/>
        <end position="378"/>
    </location>
</feature>
<feature type="strand" evidence="2">
    <location>
        <begin position="380"/>
        <end position="388"/>
    </location>
</feature>
<feature type="helix" evidence="2">
    <location>
        <begin position="389"/>
        <end position="399"/>
    </location>
</feature>
<feature type="turn" evidence="2">
    <location>
        <begin position="411"/>
        <end position="413"/>
    </location>
</feature>
<feature type="helix" evidence="2">
    <location>
        <begin position="414"/>
        <end position="417"/>
    </location>
</feature>
<feature type="strand" evidence="2">
    <location>
        <begin position="420"/>
        <end position="422"/>
    </location>
</feature>
<organism>
    <name type="scientific">Aquifex aeolicus (strain VF5)</name>
    <dbReference type="NCBI Taxonomy" id="224324"/>
    <lineage>
        <taxon>Bacteria</taxon>
        <taxon>Pseudomonadati</taxon>
        <taxon>Aquificota</taxon>
        <taxon>Aquificia</taxon>
        <taxon>Aquificales</taxon>
        <taxon>Aquificaceae</taxon>
        <taxon>Aquifex</taxon>
    </lineage>
</organism>
<dbReference type="EC" id="6.1.1.11" evidence="1"/>
<dbReference type="EMBL" id="AE000657">
    <property type="protein sequence ID" value="AAC06595.1"/>
    <property type="molecule type" value="Genomic_DNA"/>
</dbReference>
<dbReference type="PIR" id="C70327">
    <property type="entry name" value="C70327"/>
</dbReference>
<dbReference type="RefSeq" id="NP_213207.1">
    <property type="nucleotide sequence ID" value="NC_000918.1"/>
</dbReference>
<dbReference type="RefSeq" id="WP_010880145.1">
    <property type="nucleotide sequence ID" value="NC_000918.1"/>
</dbReference>
<dbReference type="PDB" id="2DQ3">
    <property type="method" value="X-ray"/>
    <property type="resolution" value="3.00 A"/>
    <property type="chains" value="A/B=1-425"/>
</dbReference>
<dbReference type="PDBsum" id="2DQ3"/>
<dbReference type="SMR" id="O66647"/>
<dbReference type="FunCoup" id="O66647">
    <property type="interactions" value="450"/>
</dbReference>
<dbReference type="STRING" id="224324.aq_298"/>
<dbReference type="EnsemblBacteria" id="AAC06595">
    <property type="protein sequence ID" value="AAC06595"/>
    <property type="gene ID" value="aq_298"/>
</dbReference>
<dbReference type="KEGG" id="aae:aq_298"/>
<dbReference type="PATRIC" id="fig|224324.8.peg.245"/>
<dbReference type="eggNOG" id="COG0172">
    <property type="taxonomic scope" value="Bacteria"/>
</dbReference>
<dbReference type="HOGENOM" id="CLU_023797_1_1_0"/>
<dbReference type="InParanoid" id="O66647"/>
<dbReference type="OrthoDB" id="9804647at2"/>
<dbReference type="UniPathway" id="UPA00906">
    <property type="reaction ID" value="UER00895"/>
</dbReference>
<dbReference type="EvolutionaryTrace" id="O66647"/>
<dbReference type="Proteomes" id="UP000000798">
    <property type="component" value="Chromosome"/>
</dbReference>
<dbReference type="GO" id="GO:0005737">
    <property type="term" value="C:cytoplasm"/>
    <property type="evidence" value="ECO:0007669"/>
    <property type="project" value="UniProtKB-SubCell"/>
</dbReference>
<dbReference type="GO" id="GO:0005524">
    <property type="term" value="F:ATP binding"/>
    <property type="evidence" value="ECO:0007669"/>
    <property type="project" value="UniProtKB-UniRule"/>
</dbReference>
<dbReference type="GO" id="GO:0004828">
    <property type="term" value="F:serine-tRNA ligase activity"/>
    <property type="evidence" value="ECO:0007669"/>
    <property type="project" value="UniProtKB-UniRule"/>
</dbReference>
<dbReference type="GO" id="GO:0016260">
    <property type="term" value="P:selenocysteine biosynthetic process"/>
    <property type="evidence" value="ECO:0007669"/>
    <property type="project" value="UniProtKB-UniRule"/>
</dbReference>
<dbReference type="GO" id="GO:0006434">
    <property type="term" value="P:seryl-tRNA aminoacylation"/>
    <property type="evidence" value="ECO:0007669"/>
    <property type="project" value="UniProtKB-UniRule"/>
</dbReference>
<dbReference type="CDD" id="cd00770">
    <property type="entry name" value="SerRS_core"/>
    <property type="match status" value="1"/>
</dbReference>
<dbReference type="Gene3D" id="3.30.930.10">
    <property type="entry name" value="Bira Bifunctional Protein, Domain 2"/>
    <property type="match status" value="1"/>
</dbReference>
<dbReference type="Gene3D" id="1.10.287.40">
    <property type="entry name" value="Serine-tRNA synthetase, tRNA binding domain"/>
    <property type="match status" value="1"/>
</dbReference>
<dbReference type="HAMAP" id="MF_00176">
    <property type="entry name" value="Ser_tRNA_synth_type1"/>
    <property type="match status" value="1"/>
</dbReference>
<dbReference type="InterPro" id="IPR002314">
    <property type="entry name" value="aa-tRNA-synt_IIb"/>
</dbReference>
<dbReference type="InterPro" id="IPR006195">
    <property type="entry name" value="aa-tRNA-synth_II"/>
</dbReference>
<dbReference type="InterPro" id="IPR045864">
    <property type="entry name" value="aa-tRNA-synth_II/BPL/LPL"/>
</dbReference>
<dbReference type="InterPro" id="IPR002317">
    <property type="entry name" value="Ser-tRNA-ligase_type_1"/>
</dbReference>
<dbReference type="InterPro" id="IPR015866">
    <property type="entry name" value="Ser-tRNA-synth_1_N"/>
</dbReference>
<dbReference type="InterPro" id="IPR042103">
    <property type="entry name" value="SerRS_1_N_sf"/>
</dbReference>
<dbReference type="InterPro" id="IPR033729">
    <property type="entry name" value="SerRS_core"/>
</dbReference>
<dbReference type="InterPro" id="IPR010978">
    <property type="entry name" value="tRNA-bd_arm"/>
</dbReference>
<dbReference type="NCBIfam" id="TIGR00414">
    <property type="entry name" value="serS"/>
    <property type="match status" value="1"/>
</dbReference>
<dbReference type="PANTHER" id="PTHR43697:SF1">
    <property type="entry name" value="SERINE--TRNA LIGASE"/>
    <property type="match status" value="1"/>
</dbReference>
<dbReference type="PANTHER" id="PTHR43697">
    <property type="entry name" value="SERYL-TRNA SYNTHETASE"/>
    <property type="match status" value="1"/>
</dbReference>
<dbReference type="Pfam" id="PF02403">
    <property type="entry name" value="Seryl_tRNA_N"/>
    <property type="match status" value="1"/>
</dbReference>
<dbReference type="Pfam" id="PF00587">
    <property type="entry name" value="tRNA-synt_2b"/>
    <property type="match status" value="1"/>
</dbReference>
<dbReference type="PIRSF" id="PIRSF001529">
    <property type="entry name" value="Ser-tRNA-synth_IIa"/>
    <property type="match status" value="1"/>
</dbReference>
<dbReference type="PRINTS" id="PR00981">
    <property type="entry name" value="TRNASYNTHSER"/>
</dbReference>
<dbReference type="SUPFAM" id="SSF55681">
    <property type="entry name" value="Class II aaRS and biotin synthetases"/>
    <property type="match status" value="1"/>
</dbReference>
<dbReference type="SUPFAM" id="SSF46589">
    <property type="entry name" value="tRNA-binding arm"/>
    <property type="match status" value="1"/>
</dbReference>
<dbReference type="PROSITE" id="PS50862">
    <property type="entry name" value="AA_TRNA_LIGASE_II"/>
    <property type="match status" value="1"/>
</dbReference>
<protein>
    <recommendedName>
        <fullName evidence="1">Serine--tRNA ligase</fullName>
        <ecNumber evidence="1">6.1.1.11</ecNumber>
    </recommendedName>
    <alternativeName>
        <fullName evidence="1">Seryl-tRNA synthetase</fullName>
        <shortName evidence="1">SerRS</shortName>
    </alternativeName>
    <alternativeName>
        <fullName evidence="1">Seryl-tRNA(Ser/Sec) synthetase</fullName>
    </alternativeName>
</protein>
<gene>
    <name evidence="1" type="primary">serS</name>
    <name type="ordered locus">aq_298</name>
</gene>
<keyword id="KW-0002">3D-structure</keyword>
<keyword id="KW-0030">Aminoacyl-tRNA synthetase</keyword>
<keyword id="KW-0067">ATP-binding</keyword>
<keyword id="KW-0963">Cytoplasm</keyword>
<keyword id="KW-0436">Ligase</keyword>
<keyword id="KW-0547">Nucleotide-binding</keyword>
<keyword id="KW-0648">Protein biosynthesis</keyword>
<keyword id="KW-1185">Reference proteome</keyword>
<name>SYS_AQUAE</name>
<evidence type="ECO:0000255" key="1">
    <source>
        <dbReference type="HAMAP-Rule" id="MF_00176"/>
    </source>
</evidence>
<evidence type="ECO:0007829" key="2">
    <source>
        <dbReference type="PDB" id="2DQ3"/>
    </source>
</evidence>
<accession>O66647</accession>
<comment type="function">
    <text evidence="1">Catalyzes the attachment of serine to tRNA(Ser). Is also able to aminoacylate tRNA(Sec) with serine, to form the misacylated tRNA L-seryl-tRNA(Sec), which will be further converted into selenocysteinyl-tRNA(Sec).</text>
</comment>
<comment type="catalytic activity">
    <reaction evidence="1">
        <text>tRNA(Ser) + L-serine + ATP = L-seryl-tRNA(Ser) + AMP + diphosphate + H(+)</text>
        <dbReference type="Rhea" id="RHEA:12292"/>
        <dbReference type="Rhea" id="RHEA-COMP:9669"/>
        <dbReference type="Rhea" id="RHEA-COMP:9703"/>
        <dbReference type="ChEBI" id="CHEBI:15378"/>
        <dbReference type="ChEBI" id="CHEBI:30616"/>
        <dbReference type="ChEBI" id="CHEBI:33019"/>
        <dbReference type="ChEBI" id="CHEBI:33384"/>
        <dbReference type="ChEBI" id="CHEBI:78442"/>
        <dbReference type="ChEBI" id="CHEBI:78533"/>
        <dbReference type="ChEBI" id="CHEBI:456215"/>
        <dbReference type="EC" id="6.1.1.11"/>
    </reaction>
</comment>
<comment type="catalytic activity">
    <reaction evidence="1">
        <text>tRNA(Sec) + L-serine + ATP = L-seryl-tRNA(Sec) + AMP + diphosphate + H(+)</text>
        <dbReference type="Rhea" id="RHEA:42580"/>
        <dbReference type="Rhea" id="RHEA-COMP:9742"/>
        <dbReference type="Rhea" id="RHEA-COMP:10128"/>
        <dbReference type="ChEBI" id="CHEBI:15378"/>
        <dbReference type="ChEBI" id="CHEBI:30616"/>
        <dbReference type="ChEBI" id="CHEBI:33019"/>
        <dbReference type="ChEBI" id="CHEBI:33384"/>
        <dbReference type="ChEBI" id="CHEBI:78442"/>
        <dbReference type="ChEBI" id="CHEBI:78533"/>
        <dbReference type="ChEBI" id="CHEBI:456215"/>
        <dbReference type="EC" id="6.1.1.11"/>
    </reaction>
</comment>
<comment type="pathway">
    <text evidence="1">Aminoacyl-tRNA biosynthesis; selenocysteinyl-tRNA(Sec) biosynthesis; L-seryl-tRNA(Sec) from L-serine and tRNA(Sec): step 1/1.</text>
</comment>
<comment type="subunit">
    <text evidence="1">Homodimer. The tRNA molecule binds across the dimer.</text>
</comment>
<comment type="subcellular location">
    <subcellularLocation>
        <location evidence="1">Cytoplasm</location>
    </subcellularLocation>
</comment>
<comment type="domain">
    <text evidence="1">Consists of two distinct domains, a catalytic core and a N-terminal extension that is involved in tRNA binding.</text>
</comment>
<comment type="similarity">
    <text evidence="1">Belongs to the class-II aminoacyl-tRNA synthetase family. Type-1 seryl-tRNA synthetase subfamily.</text>
</comment>
<reference key="1">
    <citation type="journal article" date="1998" name="Nature">
        <title>The complete genome of the hyperthermophilic bacterium Aquifex aeolicus.</title>
        <authorList>
            <person name="Deckert G."/>
            <person name="Warren P.V."/>
            <person name="Gaasterland T."/>
            <person name="Young W.G."/>
            <person name="Lenox A.L."/>
            <person name="Graham D.E."/>
            <person name="Overbeek R."/>
            <person name="Snead M.A."/>
            <person name="Keller M."/>
            <person name="Aujay M."/>
            <person name="Huber R."/>
            <person name="Feldman R.A."/>
            <person name="Short J.M."/>
            <person name="Olsen G.J."/>
            <person name="Swanson R.V."/>
        </authorList>
    </citation>
    <scope>NUCLEOTIDE SEQUENCE [LARGE SCALE GENOMIC DNA]</scope>
    <source>
        <strain>VF5</strain>
    </source>
</reference>
<sequence length="425" mass="49433">MIDINLIREKPDYVKERLATRDKELVSLVDKVLELDKRRREIIKRLEALRSERNKLSKEIGKLKREGKDTTEIQNRVKELKEEIDRLEEELRKVEEELKNTLLWIPNLPHPSVPVGEDEKDNVEVRRWGEPRKFDFEPKPHWEIGERLGILDFKRGAKLSGSRFTVIAGWGARLERALINFMLDLHTKKGYKEICPPHLVKPEILIGTGQLPKFEEDLYKCERDNLYLIPTAEVPLTNLYREEILKEENLPIYLTAYTPCYRREAGAYGKDIRGIIRQHQFDKVELVKIVHPDTSYDELEKLVKDAEEVLQLLGLPYRVVELCTGDLGFSAAKTYDIEVWFPSQNKYREISSCSNCEDFQARRMNTRFKDSKTGKNRFVHTLNGSGLAVGRTLAAILENYQQEDGSVVVPEVLRDYVGTDVIRPE</sequence>
<proteinExistence type="evidence at protein level"/>